<organism>
    <name type="scientific">Levilactobacillus brevis (strain ATCC 367 / BCRC 12310 / CIP 105137 / JCM 1170 / LMG 11437 / NCIMB 947 / NCTC 947)</name>
    <name type="common">Lactobacillus brevis</name>
    <dbReference type="NCBI Taxonomy" id="387344"/>
    <lineage>
        <taxon>Bacteria</taxon>
        <taxon>Bacillati</taxon>
        <taxon>Bacillota</taxon>
        <taxon>Bacilli</taxon>
        <taxon>Lactobacillales</taxon>
        <taxon>Lactobacillaceae</taxon>
        <taxon>Levilactobacillus</taxon>
    </lineage>
</organism>
<accession>Q03R67</accession>
<keyword id="KW-0963">Cytoplasm</keyword>
<keyword id="KW-0238">DNA-binding</keyword>
<keyword id="KW-1185">Reference proteome</keyword>
<keyword id="KW-0804">Transcription</keyword>
<keyword id="KW-0805">Transcription regulation</keyword>
<comment type="subcellular location">
    <subcellularLocation>
        <location evidence="1">Cytoplasm</location>
    </subcellularLocation>
</comment>
<comment type="similarity">
    <text evidence="1">Belongs to the TACO1 family.</text>
</comment>
<evidence type="ECO:0000255" key="1">
    <source>
        <dbReference type="HAMAP-Rule" id="MF_00693"/>
    </source>
</evidence>
<evidence type="ECO:0000256" key="2">
    <source>
        <dbReference type="SAM" id="MobiDB-lite"/>
    </source>
</evidence>
<gene>
    <name type="ordered locus">LVIS_1199</name>
</gene>
<dbReference type="EMBL" id="CP000416">
    <property type="protein sequence ID" value="ABJ64305.1"/>
    <property type="molecule type" value="Genomic_DNA"/>
</dbReference>
<dbReference type="RefSeq" id="WP_011667935.1">
    <property type="nucleotide sequence ID" value="NC_008497.1"/>
</dbReference>
<dbReference type="SMR" id="Q03R67"/>
<dbReference type="STRING" id="387344.LVIS_1199"/>
<dbReference type="KEGG" id="lbr:LVIS_1199"/>
<dbReference type="eggNOG" id="COG0217">
    <property type="taxonomic scope" value="Bacteria"/>
</dbReference>
<dbReference type="HOGENOM" id="CLU_062974_3_0_9"/>
<dbReference type="Proteomes" id="UP000001652">
    <property type="component" value="Chromosome"/>
</dbReference>
<dbReference type="GO" id="GO:0005829">
    <property type="term" value="C:cytosol"/>
    <property type="evidence" value="ECO:0007669"/>
    <property type="project" value="TreeGrafter"/>
</dbReference>
<dbReference type="GO" id="GO:0003677">
    <property type="term" value="F:DNA binding"/>
    <property type="evidence" value="ECO:0007669"/>
    <property type="project" value="UniProtKB-UniRule"/>
</dbReference>
<dbReference type="GO" id="GO:0006355">
    <property type="term" value="P:regulation of DNA-templated transcription"/>
    <property type="evidence" value="ECO:0007669"/>
    <property type="project" value="UniProtKB-UniRule"/>
</dbReference>
<dbReference type="FunFam" id="1.10.10.200:FF:000002">
    <property type="entry name" value="Probable transcriptional regulatory protein CLM62_37755"/>
    <property type="match status" value="1"/>
</dbReference>
<dbReference type="FunFam" id="3.30.70.980:FF:000002">
    <property type="entry name" value="Probable transcriptional regulatory protein YebC"/>
    <property type="match status" value="1"/>
</dbReference>
<dbReference type="Gene3D" id="1.10.10.200">
    <property type="match status" value="1"/>
</dbReference>
<dbReference type="Gene3D" id="3.30.70.980">
    <property type="match status" value="2"/>
</dbReference>
<dbReference type="HAMAP" id="MF_00693">
    <property type="entry name" value="Transcrip_reg_TACO1"/>
    <property type="match status" value="1"/>
</dbReference>
<dbReference type="InterPro" id="IPR017856">
    <property type="entry name" value="Integrase-like_N"/>
</dbReference>
<dbReference type="InterPro" id="IPR048300">
    <property type="entry name" value="TACO1_YebC-like_2nd/3rd_dom"/>
</dbReference>
<dbReference type="InterPro" id="IPR049083">
    <property type="entry name" value="TACO1_YebC_N"/>
</dbReference>
<dbReference type="InterPro" id="IPR002876">
    <property type="entry name" value="Transcrip_reg_TACO1-like"/>
</dbReference>
<dbReference type="InterPro" id="IPR026564">
    <property type="entry name" value="Transcrip_reg_TACO1-like_dom3"/>
</dbReference>
<dbReference type="InterPro" id="IPR029072">
    <property type="entry name" value="YebC-like"/>
</dbReference>
<dbReference type="NCBIfam" id="NF001030">
    <property type="entry name" value="PRK00110.1"/>
    <property type="match status" value="1"/>
</dbReference>
<dbReference type="NCBIfam" id="NF009044">
    <property type="entry name" value="PRK12378.1"/>
    <property type="match status" value="1"/>
</dbReference>
<dbReference type="NCBIfam" id="TIGR01033">
    <property type="entry name" value="YebC/PmpR family DNA-binding transcriptional regulator"/>
    <property type="match status" value="1"/>
</dbReference>
<dbReference type="PANTHER" id="PTHR12532:SF6">
    <property type="entry name" value="TRANSCRIPTIONAL REGULATORY PROTEIN YEBC-RELATED"/>
    <property type="match status" value="1"/>
</dbReference>
<dbReference type="PANTHER" id="PTHR12532">
    <property type="entry name" value="TRANSLATIONAL ACTIVATOR OF CYTOCHROME C OXIDASE 1"/>
    <property type="match status" value="1"/>
</dbReference>
<dbReference type="Pfam" id="PF20772">
    <property type="entry name" value="TACO1_YebC_N"/>
    <property type="match status" value="1"/>
</dbReference>
<dbReference type="Pfam" id="PF01709">
    <property type="entry name" value="Transcrip_reg"/>
    <property type="match status" value="1"/>
</dbReference>
<dbReference type="SUPFAM" id="SSF75625">
    <property type="entry name" value="YebC-like"/>
    <property type="match status" value="1"/>
</dbReference>
<feature type="chain" id="PRO_1000045323" description="Probable transcriptional regulatory protein LVIS_1199">
    <location>
        <begin position="1"/>
        <end position="245"/>
    </location>
</feature>
<feature type="region of interest" description="Disordered" evidence="2">
    <location>
        <begin position="1"/>
        <end position="23"/>
    </location>
</feature>
<name>Y1199_LEVBA</name>
<proteinExistence type="inferred from homology"/>
<protein>
    <recommendedName>
        <fullName evidence="1">Probable transcriptional regulatory protein LVIS_1199</fullName>
    </recommendedName>
</protein>
<sequence>MSGHSKWHNIQGRKNAQDAKRGKIFQKISRDLYQAAKAGGPDPDGNPQLRLEMDKARAANMPKENIKRALDKASGVGGAKFEEITYEGYGPAGTAIMVAALTDNKNRTAAAIRSAFTHHGGSLGAAGSVSYMFDRKGYIVILREDLDTDEDTMLMDALDAGADDMETTDDAFKIYTDPSSVTAVRDALQEKGYSLDTAEARMFPQNTTEVPEAKASQYQGLIDELEDNDDVSDIYEAAVLPEGVE</sequence>
<reference key="1">
    <citation type="journal article" date="2006" name="Proc. Natl. Acad. Sci. U.S.A.">
        <title>Comparative genomics of the lactic acid bacteria.</title>
        <authorList>
            <person name="Makarova K.S."/>
            <person name="Slesarev A."/>
            <person name="Wolf Y.I."/>
            <person name="Sorokin A."/>
            <person name="Mirkin B."/>
            <person name="Koonin E.V."/>
            <person name="Pavlov A."/>
            <person name="Pavlova N."/>
            <person name="Karamychev V."/>
            <person name="Polouchine N."/>
            <person name="Shakhova V."/>
            <person name="Grigoriev I."/>
            <person name="Lou Y."/>
            <person name="Rohksar D."/>
            <person name="Lucas S."/>
            <person name="Huang K."/>
            <person name="Goodstein D.M."/>
            <person name="Hawkins T."/>
            <person name="Plengvidhya V."/>
            <person name="Welker D."/>
            <person name="Hughes J."/>
            <person name="Goh Y."/>
            <person name="Benson A."/>
            <person name="Baldwin K."/>
            <person name="Lee J.-H."/>
            <person name="Diaz-Muniz I."/>
            <person name="Dosti B."/>
            <person name="Smeianov V."/>
            <person name="Wechter W."/>
            <person name="Barabote R."/>
            <person name="Lorca G."/>
            <person name="Altermann E."/>
            <person name="Barrangou R."/>
            <person name="Ganesan B."/>
            <person name="Xie Y."/>
            <person name="Rawsthorne H."/>
            <person name="Tamir D."/>
            <person name="Parker C."/>
            <person name="Breidt F."/>
            <person name="Broadbent J.R."/>
            <person name="Hutkins R."/>
            <person name="O'Sullivan D."/>
            <person name="Steele J."/>
            <person name="Unlu G."/>
            <person name="Saier M.H. Jr."/>
            <person name="Klaenhammer T."/>
            <person name="Richardson P."/>
            <person name="Kozyavkin S."/>
            <person name="Weimer B.C."/>
            <person name="Mills D.A."/>
        </authorList>
    </citation>
    <scope>NUCLEOTIDE SEQUENCE [LARGE SCALE GENOMIC DNA]</scope>
    <source>
        <strain>ATCC 367 / BCRC 12310 / CIP 105137 / JCM 1170 / LMG 11437 / NCIMB 947 / NCTC 947</strain>
    </source>
</reference>